<sequence length="176" mass="20142">MRLIDPDADLEFDPDSVYDGPSKSQKKREVEALQDLGNELVKLPDAQFKRIELPEELREAVAACRKITQNSALRRQRQYIGKLMRGIDPAPIQAQLDAFKGVSATENAKLHQAEKWRDRLIADNEALTIFLDSYPETDATRLRQLIRNARDEAARNKPPKAFREIFRVIREAMQAG</sequence>
<organism>
    <name type="scientific">Thiobacillus denitrificans (strain ATCC 25259 / T1)</name>
    <dbReference type="NCBI Taxonomy" id="292415"/>
    <lineage>
        <taxon>Bacteria</taxon>
        <taxon>Pseudomonadati</taxon>
        <taxon>Pseudomonadota</taxon>
        <taxon>Betaproteobacteria</taxon>
        <taxon>Nitrosomonadales</taxon>
        <taxon>Thiobacillaceae</taxon>
        <taxon>Thiobacillus</taxon>
    </lineage>
</organism>
<accession>Q3SGZ3</accession>
<name>DARP_THIDA</name>
<feature type="chain" id="PRO_0000257644" description="Dual-action ribosomal maturation protein DarP">
    <location>
        <begin position="1"/>
        <end position="176"/>
    </location>
</feature>
<feature type="region of interest" description="Disordered" evidence="2">
    <location>
        <begin position="1"/>
        <end position="29"/>
    </location>
</feature>
<feature type="compositionally biased region" description="Acidic residues" evidence="2">
    <location>
        <begin position="1"/>
        <end position="16"/>
    </location>
</feature>
<keyword id="KW-0963">Cytoplasm</keyword>
<keyword id="KW-1185">Reference proteome</keyword>
<keyword id="KW-0690">Ribosome biogenesis</keyword>
<keyword id="KW-0694">RNA-binding</keyword>
<keyword id="KW-0699">rRNA-binding</keyword>
<dbReference type="EMBL" id="CP000116">
    <property type="protein sequence ID" value="AAZ98100.1"/>
    <property type="molecule type" value="Genomic_DNA"/>
</dbReference>
<dbReference type="RefSeq" id="WP_011312659.1">
    <property type="nucleotide sequence ID" value="NC_007404.1"/>
</dbReference>
<dbReference type="SMR" id="Q3SGZ3"/>
<dbReference type="STRING" id="292415.Tbd_2147"/>
<dbReference type="KEGG" id="tbd:Tbd_2147"/>
<dbReference type="eggNOG" id="COG3028">
    <property type="taxonomic scope" value="Bacteria"/>
</dbReference>
<dbReference type="HOGENOM" id="CLU_106757_1_0_4"/>
<dbReference type="OrthoDB" id="5293604at2"/>
<dbReference type="Proteomes" id="UP000008291">
    <property type="component" value="Chromosome"/>
</dbReference>
<dbReference type="GO" id="GO:0005829">
    <property type="term" value="C:cytosol"/>
    <property type="evidence" value="ECO:0007669"/>
    <property type="project" value="TreeGrafter"/>
</dbReference>
<dbReference type="GO" id="GO:0043022">
    <property type="term" value="F:ribosome binding"/>
    <property type="evidence" value="ECO:0007669"/>
    <property type="project" value="UniProtKB-UniRule"/>
</dbReference>
<dbReference type="GO" id="GO:0019843">
    <property type="term" value="F:rRNA binding"/>
    <property type="evidence" value="ECO:0007669"/>
    <property type="project" value="UniProtKB-UniRule"/>
</dbReference>
<dbReference type="GO" id="GO:1902626">
    <property type="term" value="P:assembly of large subunit precursor of preribosome"/>
    <property type="evidence" value="ECO:0007669"/>
    <property type="project" value="UniProtKB-UniRule"/>
</dbReference>
<dbReference type="CDD" id="cd16331">
    <property type="entry name" value="YjgA-like"/>
    <property type="match status" value="1"/>
</dbReference>
<dbReference type="Gene3D" id="1.10.60.30">
    <property type="entry name" value="PSPTO4464-like domains"/>
    <property type="match status" value="2"/>
</dbReference>
<dbReference type="HAMAP" id="MF_00765">
    <property type="entry name" value="DarP"/>
    <property type="match status" value="1"/>
</dbReference>
<dbReference type="InterPro" id="IPR006839">
    <property type="entry name" value="DarP"/>
</dbReference>
<dbReference type="InterPro" id="IPR023153">
    <property type="entry name" value="DarP_sf"/>
</dbReference>
<dbReference type="NCBIfam" id="NF003593">
    <property type="entry name" value="PRK05255.1-1"/>
    <property type="match status" value="1"/>
</dbReference>
<dbReference type="PANTHER" id="PTHR38101">
    <property type="entry name" value="UPF0307 PROTEIN YJGA"/>
    <property type="match status" value="1"/>
</dbReference>
<dbReference type="PANTHER" id="PTHR38101:SF1">
    <property type="entry name" value="UPF0307 PROTEIN YJGA"/>
    <property type="match status" value="1"/>
</dbReference>
<dbReference type="Pfam" id="PF04751">
    <property type="entry name" value="DarP"/>
    <property type="match status" value="1"/>
</dbReference>
<dbReference type="PIRSF" id="PIRSF016183">
    <property type="entry name" value="UCP016183"/>
    <property type="match status" value="1"/>
</dbReference>
<dbReference type="SUPFAM" id="SSF158710">
    <property type="entry name" value="PSPTO4464-like"/>
    <property type="match status" value="1"/>
</dbReference>
<reference key="1">
    <citation type="journal article" date="2006" name="J. Bacteriol.">
        <title>The genome sequence of the obligately chemolithoautotrophic, facultatively anaerobic bacterium Thiobacillus denitrificans.</title>
        <authorList>
            <person name="Beller H.R."/>
            <person name="Chain P.S."/>
            <person name="Letain T.E."/>
            <person name="Chakicherla A."/>
            <person name="Larimer F.W."/>
            <person name="Richardson P.M."/>
            <person name="Coleman M.A."/>
            <person name="Wood A.P."/>
            <person name="Kelly D.P."/>
        </authorList>
    </citation>
    <scope>NUCLEOTIDE SEQUENCE [LARGE SCALE GENOMIC DNA]</scope>
    <source>
        <strain>ATCC 25259 / T1</strain>
    </source>
</reference>
<proteinExistence type="inferred from homology"/>
<gene>
    <name evidence="1" type="primary">darP</name>
    <name type="ordered locus">Tbd_2147</name>
</gene>
<evidence type="ECO:0000255" key="1">
    <source>
        <dbReference type="HAMAP-Rule" id="MF_00765"/>
    </source>
</evidence>
<evidence type="ECO:0000256" key="2">
    <source>
        <dbReference type="SAM" id="MobiDB-lite"/>
    </source>
</evidence>
<comment type="function">
    <text evidence="1">Member of a network of 50S ribosomal subunit biogenesis factors which assembles along the 30S-50S interface, preventing incorrect 23S rRNA structures from forming. Promotes peptidyl transferase center (PTC) maturation.</text>
</comment>
<comment type="subcellular location">
    <subcellularLocation>
        <location evidence="1">Cytoplasm</location>
    </subcellularLocation>
    <text evidence="1">Associates with late stage pre-50S ribosomal subunits.</text>
</comment>
<comment type="similarity">
    <text evidence="1">Belongs to the DarP family.</text>
</comment>
<protein>
    <recommendedName>
        <fullName evidence="1">Dual-action ribosomal maturation protein DarP</fullName>
    </recommendedName>
    <alternativeName>
        <fullName evidence="1">Large ribosomal subunit assembly factor DarP</fullName>
    </alternativeName>
</protein>